<organism>
    <name type="scientific">Geobacillus stearothermophilus (strain DSM 13240 / CIP 106956 / 10)</name>
    <dbReference type="NCBI Taxonomy" id="272567"/>
    <lineage>
        <taxon>Bacteria</taxon>
        <taxon>Bacillati</taxon>
        <taxon>Bacillota</taxon>
        <taxon>Bacilli</taxon>
        <taxon>Bacillales</taxon>
        <taxon>Anoxybacillaceae</taxon>
        <taxon>Geobacillus</taxon>
    </lineage>
</organism>
<protein>
    <recommendedName>
        <fullName evidence="2 4">DNA-directed RNA polymerase subunit epsilon</fullName>
        <shortName evidence="2">RNAP epsilon subunit</shortName>
        <ecNumber evidence="2">2.7.7.6</ecNumber>
    </recommendedName>
    <alternativeName>
        <fullName evidence="2">RNA polymerase epsilon subunit</fullName>
    </alternativeName>
    <alternativeName>
        <fullName evidence="2">Transcriptase subunit epsilon</fullName>
    </alternativeName>
</protein>
<comment type="function">
    <text evidence="3 5">A non-essential component of RNA polymerase (RNAP) (Probable). Has a similar structure to bacteriophage T7 protein Gp2 (AC P03704), which is known to bind to RNAP in the DNA binding-cleft. Unlike Gp2 however, this protein does not inhibit transcription initiation (PubMed:25092033).</text>
</comment>
<comment type="catalytic activity">
    <reaction evidence="2">
        <text>RNA(n) + a ribonucleoside 5'-triphosphate = RNA(n+1) + diphosphate</text>
        <dbReference type="Rhea" id="RHEA:21248"/>
        <dbReference type="Rhea" id="RHEA-COMP:14527"/>
        <dbReference type="Rhea" id="RHEA-COMP:17342"/>
        <dbReference type="ChEBI" id="CHEBI:33019"/>
        <dbReference type="ChEBI" id="CHEBI:61557"/>
        <dbReference type="ChEBI" id="CHEBI:140395"/>
        <dbReference type="EC" id="2.7.7.6"/>
    </reaction>
</comment>
<comment type="subunit">
    <text evidence="1 3">Monomer (PubMed:25092033). RNAP is composed of a core of 2 alpha, a beta and a beta' subunit. The core is associated with a delta subunit, and at least one of epsilon or omega. When a sigma factor is associated with the core the holoenzyme is formed, which can initiate transcription (By similarity).</text>
</comment>
<comment type="similarity">
    <text evidence="2">Belongs to the RNA polymerase subunit epsilon family.</text>
</comment>
<accession>A0A0K2H5X8</accession>
<proteinExistence type="evidence at protein level"/>
<feature type="chain" id="PRO_0000451559" description="DNA-directed RNA polymerase subunit epsilon">
    <location>
        <begin position="1"/>
        <end position="71"/>
    </location>
</feature>
<feature type="strand" evidence="6">
    <location>
        <begin position="1"/>
        <end position="9"/>
    </location>
</feature>
<feature type="strand" evidence="6">
    <location>
        <begin position="20"/>
        <end position="29"/>
    </location>
</feature>
<feature type="helix" evidence="6">
    <location>
        <begin position="30"/>
        <end position="37"/>
    </location>
</feature>
<feature type="strand" evidence="6">
    <location>
        <begin position="40"/>
        <end position="50"/>
    </location>
</feature>
<feature type="strand" evidence="6">
    <location>
        <begin position="53"/>
        <end position="56"/>
    </location>
</feature>
<dbReference type="EC" id="2.7.7.6" evidence="2"/>
<dbReference type="EMBL" id="CP008934">
    <property type="protein sequence ID" value="ALA69333.1"/>
    <property type="molecule type" value="Genomic_DNA"/>
</dbReference>
<dbReference type="PDB" id="4NJC">
    <property type="method" value="X-ray"/>
    <property type="resolution" value="2.30 A"/>
    <property type="chains" value="A/B/C/D/E/F/G/H=1-58"/>
</dbReference>
<dbReference type="PDBsum" id="4NJC"/>
<dbReference type="SMR" id="A0A0K2H5X8"/>
<dbReference type="KEGG" id="gse:GT50_03365"/>
<dbReference type="PATRIC" id="fig|272567.8.peg.680"/>
<dbReference type="OrthoDB" id="2147503at2"/>
<dbReference type="EvolutionaryTrace" id="A0A0K2H5X8"/>
<dbReference type="GO" id="GO:0000428">
    <property type="term" value="C:DNA-directed RNA polymerase complex"/>
    <property type="evidence" value="ECO:0007669"/>
    <property type="project" value="UniProtKB-KW"/>
</dbReference>
<dbReference type="GO" id="GO:0003677">
    <property type="term" value="F:DNA binding"/>
    <property type="evidence" value="ECO:0007669"/>
    <property type="project" value="UniProtKB-UniRule"/>
</dbReference>
<dbReference type="GO" id="GO:0003899">
    <property type="term" value="F:DNA-directed RNA polymerase activity"/>
    <property type="evidence" value="ECO:0007669"/>
    <property type="project" value="UniProtKB-UniRule"/>
</dbReference>
<dbReference type="GO" id="GO:0006351">
    <property type="term" value="P:DNA-templated transcription"/>
    <property type="evidence" value="ECO:0007669"/>
    <property type="project" value="UniProtKB-UniRule"/>
</dbReference>
<dbReference type="Gene3D" id="3.10.20.730">
    <property type="entry name" value="RNAP, epsilon subunit-like"/>
    <property type="match status" value="1"/>
</dbReference>
<dbReference type="HAMAP" id="MF_01553">
    <property type="entry name" value="RNApol_bact_RpoY"/>
    <property type="match status" value="1"/>
</dbReference>
<dbReference type="InterPro" id="IPR009907">
    <property type="entry name" value="RpoY"/>
</dbReference>
<dbReference type="NCBIfam" id="NF010188">
    <property type="entry name" value="PRK13667.1"/>
    <property type="match status" value="1"/>
</dbReference>
<dbReference type="Pfam" id="PF07288">
    <property type="entry name" value="RpoY"/>
    <property type="match status" value="1"/>
</dbReference>
<name>RPOY_GEOS3</name>
<evidence type="ECO:0000250" key="1">
    <source>
        <dbReference type="UniProtKB" id="O31718"/>
    </source>
</evidence>
<evidence type="ECO:0000255" key="2">
    <source>
        <dbReference type="HAMAP-Rule" id="MF_01553"/>
    </source>
</evidence>
<evidence type="ECO:0000269" key="3">
    <source>
    </source>
</evidence>
<evidence type="ECO:0000303" key="4">
    <source>
    </source>
</evidence>
<evidence type="ECO:0000305" key="5"/>
<evidence type="ECO:0007829" key="6">
    <source>
        <dbReference type="PDB" id="4NJC"/>
    </source>
</evidence>
<sequence>MIFKVFYQENADEVPVREKTKTLYIEAESERDVRRKLEGRPINIEYIQPLEGAHLEYEKKSPNFQVLEISS</sequence>
<keyword id="KW-0002">3D-structure</keyword>
<keyword id="KW-0240">DNA-directed RNA polymerase</keyword>
<keyword id="KW-0548">Nucleotidyltransferase</keyword>
<keyword id="KW-0804">Transcription</keyword>
<keyword id="KW-0808">Transferase</keyword>
<gene>
    <name evidence="2 4" type="primary">rpoY</name>
    <name type="ORF">GT50_03365</name>
</gene>
<reference key="1">
    <citation type="submission" date="2014-07" db="EMBL/GenBank/DDBJ databases">
        <title>Complete genome Sequence of Geobacillus stearothermophilus strain 10, a Yellowstone hot spring isolate.</title>
        <authorList>
            <person name="Lewis S.A."/>
            <person name="Clifton S.W."/>
            <person name="Najar F.Z."/>
            <person name="Roe B.A."/>
        </authorList>
    </citation>
    <scope>NUCLEOTIDE SEQUENCE [LARGE SCALE GENOMIC DNA]</scope>
    <source>
        <strain>DSM 13240 / CIP 106956 / 10</strain>
    </source>
</reference>
<reference key="2">
    <citation type="journal article" date="2014" name="J. Bacteriol.">
        <title>epsilon, a new subunit of RNA polymerase found in gram-positive bacteria.</title>
        <authorList>
            <person name="Keller A.N."/>
            <person name="Yang X."/>
            <person name="Wiedermannova J."/>
            <person name="Delumeau O."/>
            <person name="Krasny L."/>
            <person name="Lewis P.J."/>
        </authorList>
    </citation>
    <scope>X-RAY CRYSTALLOGRAPHY (2.30 ANGSTROMS) OF 1-58</scope>
    <scope>SUBUNIT</scope>
</reference>